<dbReference type="EC" id="4.1.2.63" evidence="3"/>
<dbReference type="EMBL" id="AJ278629">
    <property type="protein sequence ID" value="CAC19854.1"/>
    <property type="molecule type" value="mRNA"/>
</dbReference>
<dbReference type="EMBL" id="AL391142">
    <property type="protein sequence ID" value="CAC01733.1"/>
    <property type="molecule type" value="Genomic_DNA"/>
</dbReference>
<dbReference type="EMBL" id="CP002688">
    <property type="protein sequence ID" value="AED92419.1"/>
    <property type="molecule type" value="Genomic_DNA"/>
</dbReference>
<dbReference type="EMBL" id="AY099774">
    <property type="protein sequence ID" value="AAM20625.1"/>
    <property type="molecule type" value="mRNA"/>
</dbReference>
<dbReference type="EMBL" id="BT000284">
    <property type="protein sequence ID" value="AAN15603.1"/>
    <property type="molecule type" value="mRNA"/>
</dbReference>
<dbReference type="EMBL" id="AK175390">
    <property type="protein sequence ID" value="BAD43153.1"/>
    <property type="molecule type" value="mRNA"/>
</dbReference>
<dbReference type="PIR" id="T51575">
    <property type="entry name" value="T51575"/>
</dbReference>
<dbReference type="RefSeq" id="NP_197240.1">
    <property type="nucleotide sequence ID" value="NM_121744.4"/>
</dbReference>
<dbReference type="SMR" id="Q9LF46"/>
<dbReference type="BioGRID" id="16880">
    <property type="interactions" value="7"/>
</dbReference>
<dbReference type="FunCoup" id="Q9LF46">
    <property type="interactions" value="3595"/>
</dbReference>
<dbReference type="STRING" id="3702.Q9LF46"/>
<dbReference type="iPTMnet" id="Q9LF46"/>
<dbReference type="PaxDb" id="3702-AT5G17380.1"/>
<dbReference type="ProteomicsDB" id="247216"/>
<dbReference type="EnsemblPlants" id="AT5G17380.1">
    <property type="protein sequence ID" value="AT5G17380.1"/>
    <property type="gene ID" value="AT5G17380"/>
</dbReference>
<dbReference type="GeneID" id="831604"/>
<dbReference type="Gramene" id="AT5G17380.1">
    <property type="protein sequence ID" value="AT5G17380.1"/>
    <property type="gene ID" value="AT5G17380"/>
</dbReference>
<dbReference type="KEGG" id="ath:AT5G17380"/>
<dbReference type="Araport" id="AT5G17380"/>
<dbReference type="TAIR" id="AT5G17380"/>
<dbReference type="eggNOG" id="KOG1185">
    <property type="taxonomic scope" value="Eukaryota"/>
</dbReference>
<dbReference type="HOGENOM" id="CLU_013748_3_3_1"/>
<dbReference type="InParanoid" id="Q9LF46"/>
<dbReference type="OMA" id="PGPYGCL"/>
<dbReference type="OrthoDB" id="3633556at2759"/>
<dbReference type="PhylomeDB" id="Q9LF46"/>
<dbReference type="BioCyc" id="ARA:AT5G17380-MONOMER"/>
<dbReference type="BioCyc" id="MetaCyc:AT5G17380-MONOMER"/>
<dbReference type="CD-CODE" id="4299E36E">
    <property type="entry name" value="Nucleolus"/>
</dbReference>
<dbReference type="PRO" id="PR:Q9LF46"/>
<dbReference type="Proteomes" id="UP000006548">
    <property type="component" value="Chromosome 5"/>
</dbReference>
<dbReference type="ExpressionAtlas" id="Q9LF46">
    <property type="expression patterns" value="baseline and differential"/>
</dbReference>
<dbReference type="GO" id="GO:0005829">
    <property type="term" value="C:cytosol"/>
    <property type="evidence" value="ECO:0007005"/>
    <property type="project" value="TAIR"/>
</dbReference>
<dbReference type="GO" id="GO:0009536">
    <property type="term" value="C:plastid"/>
    <property type="evidence" value="ECO:0007005"/>
    <property type="project" value="TAIR"/>
</dbReference>
<dbReference type="GO" id="GO:0106359">
    <property type="term" value="F:2-hydroxyacyl-CoA lyase activity"/>
    <property type="evidence" value="ECO:0007669"/>
    <property type="project" value="RHEA"/>
</dbReference>
<dbReference type="GO" id="GO:0000287">
    <property type="term" value="F:magnesium ion binding"/>
    <property type="evidence" value="ECO:0007669"/>
    <property type="project" value="InterPro"/>
</dbReference>
<dbReference type="GO" id="GO:0030976">
    <property type="term" value="F:thiamine pyrophosphate binding"/>
    <property type="evidence" value="ECO:0007669"/>
    <property type="project" value="InterPro"/>
</dbReference>
<dbReference type="CDD" id="cd02004">
    <property type="entry name" value="TPP_BZL_OCoD_HPCL"/>
    <property type="match status" value="1"/>
</dbReference>
<dbReference type="CDD" id="cd07035">
    <property type="entry name" value="TPP_PYR_POX_like"/>
    <property type="match status" value="1"/>
</dbReference>
<dbReference type="FunFam" id="3.40.50.1220:FF:000024">
    <property type="entry name" value="2-hydroxyacyl-CoA lyase"/>
    <property type="match status" value="1"/>
</dbReference>
<dbReference type="FunFam" id="3.40.50.970:FF:000050">
    <property type="entry name" value="2-hydroxyacyl-CoA lyase"/>
    <property type="match status" value="1"/>
</dbReference>
<dbReference type="FunFam" id="3.40.50.970:FF:000046">
    <property type="entry name" value="2-hydroxyacyl-CoA lyase 1"/>
    <property type="match status" value="1"/>
</dbReference>
<dbReference type="Gene3D" id="3.40.50.970">
    <property type="match status" value="2"/>
</dbReference>
<dbReference type="Gene3D" id="3.40.50.1220">
    <property type="entry name" value="TPP-binding domain"/>
    <property type="match status" value="1"/>
</dbReference>
<dbReference type="InterPro" id="IPR029035">
    <property type="entry name" value="DHS-like_NAD/FAD-binding_dom"/>
</dbReference>
<dbReference type="InterPro" id="IPR045025">
    <property type="entry name" value="HACL1-like"/>
</dbReference>
<dbReference type="InterPro" id="IPR029061">
    <property type="entry name" value="THDP-binding"/>
</dbReference>
<dbReference type="InterPro" id="IPR012000">
    <property type="entry name" value="Thiamin_PyroP_enz_cen_dom"/>
</dbReference>
<dbReference type="InterPro" id="IPR012001">
    <property type="entry name" value="Thiamin_PyroP_enz_TPP-bd_dom"/>
</dbReference>
<dbReference type="InterPro" id="IPR000399">
    <property type="entry name" value="TPP-bd_CS"/>
</dbReference>
<dbReference type="InterPro" id="IPR011766">
    <property type="entry name" value="TPP_enzyme_TPP-bd"/>
</dbReference>
<dbReference type="NCBIfam" id="NF006721">
    <property type="entry name" value="PRK09259.1"/>
    <property type="match status" value="1"/>
</dbReference>
<dbReference type="PANTHER" id="PTHR43710">
    <property type="entry name" value="2-HYDROXYACYL-COA LYASE"/>
    <property type="match status" value="1"/>
</dbReference>
<dbReference type="PANTHER" id="PTHR43710:SF2">
    <property type="entry name" value="2-HYDROXYACYL-COA LYASE 1"/>
    <property type="match status" value="1"/>
</dbReference>
<dbReference type="Pfam" id="PF02775">
    <property type="entry name" value="TPP_enzyme_C"/>
    <property type="match status" value="1"/>
</dbReference>
<dbReference type="Pfam" id="PF00205">
    <property type="entry name" value="TPP_enzyme_M"/>
    <property type="match status" value="1"/>
</dbReference>
<dbReference type="Pfam" id="PF02776">
    <property type="entry name" value="TPP_enzyme_N"/>
    <property type="match status" value="1"/>
</dbReference>
<dbReference type="SUPFAM" id="SSF52467">
    <property type="entry name" value="DHS-like NAD/FAD-binding domain"/>
    <property type="match status" value="1"/>
</dbReference>
<dbReference type="SUPFAM" id="SSF52518">
    <property type="entry name" value="Thiamin diphosphate-binding fold (THDP-binding)"/>
    <property type="match status" value="2"/>
</dbReference>
<dbReference type="PROSITE" id="PS00187">
    <property type="entry name" value="TPP_ENZYMES"/>
    <property type="match status" value="1"/>
</dbReference>
<evidence type="ECO:0000250" key="1"/>
<evidence type="ECO:0000250" key="2">
    <source>
        <dbReference type="UniProtKB" id="P40149"/>
    </source>
</evidence>
<evidence type="ECO:0000250" key="3">
    <source>
        <dbReference type="UniProtKB" id="Q9UJ83"/>
    </source>
</evidence>
<evidence type="ECO:0000305" key="4"/>
<evidence type="ECO:0007744" key="5">
    <source>
    </source>
</evidence>
<keyword id="KW-0007">Acetylation</keyword>
<keyword id="KW-0456">Lyase</keyword>
<keyword id="KW-0460">Magnesium</keyword>
<keyword id="KW-0479">Metal-binding</keyword>
<keyword id="KW-1185">Reference proteome</keyword>
<keyword id="KW-0786">Thiamine pyrophosphate</keyword>
<reference key="1">
    <citation type="submission" date="2000-06" db="EMBL/GenBank/DDBJ databases">
        <title>Cloning of Arabidopsis oxalyl-CoA decarboxylase.</title>
        <authorList>
            <person name="Van Veldhoven P.P."/>
        </authorList>
    </citation>
    <scope>NUCLEOTIDE SEQUENCE [MRNA]</scope>
</reference>
<reference key="2">
    <citation type="journal article" date="2000" name="Nature">
        <title>Sequence and analysis of chromosome 5 of the plant Arabidopsis thaliana.</title>
        <authorList>
            <person name="Tabata S."/>
            <person name="Kaneko T."/>
            <person name="Nakamura Y."/>
            <person name="Kotani H."/>
            <person name="Kato T."/>
            <person name="Asamizu E."/>
            <person name="Miyajima N."/>
            <person name="Sasamoto S."/>
            <person name="Kimura T."/>
            <person name="Hosouchi T."/>
            <person name="Kawashima K."/>
            <person name="Kohara M."/>
            <person name="Matsumoto M."/>
            <person name="Matsuno A."/>
            <person name="Muraki A."/>
            <person name="Nakayama S."/>
            <person name="Nakazaki N."/>
            <person name="Naruo K."/>
            <person name="Okumura S."/>
            <person name="Shinpo S."/>
            <person name="Takeuchi C."/>
            <person name="Wada T."/>
            <person name="Watanabe A."/>
            <person name="Yamada M."/>
            <person name="Yasuda M."/>
            <person name="Sato S."/>
            <person name="de la Bastide M."/>
            <person name="Huang E."/>
            <person name="Spiegel L."/>
            <person name="Gnoj L."/>
            <person name="O'Shaughnessy A."/>
            <person name="Preston R."/>
            <person name="Habermann K."/>
            <person name="Murray J."/>
            <person name="Johnson D."/>
            <person name="Rohlfing T."/>
            <person name="Nelson J."/>
            <person name="Stoneking T."/>
            <person name="Pepin K."/>
            <person name="Spieth J."/>
            <person name="Sekhon M."/>
            <person name="Armstrong J."/>
            <person name="Becker M."/>
            <person name="Belter E."/>
            <person name="Cordum H."/>
            <person name="Cordes M."/>
            <person name="Courtney L."/>
            <person name="Courtney W."/>
            <person name="Dante M."/>
            <person name="Du H."/>
            <person name="Edwards J."/>
            <person name="Fryman J."/>
            <person name="Haakensen B."/>
            <person name="Lamar E."/>
            <person name="Latreille P."/>
            <person name="Leonard S."/>
            <person name="Meyer R."/>
            <person name="Mulvaney E."/>
            <person name="Ozersky P."/>
            <person name="Riley A."/>
            <person name="Strowmatt C."/>
            <person name="Wagner-McPherson C."/>
            <person name="Wollam A."/>
            <person name="Yoakum M."/>
            <person name="Bell M."/>
            <person name="Dedhia N."/>
            <person name="Parnell L."/>
            <person name="Shah R."/>
            <person name="Rodriguez M."/>
            <person name="Hoon See L."/>
            <person name="Vil D."/>
            <person name="Baker J."/>
            <person name="Kirchoff K."/>
            <person name="Toth K."/>
            <person name="King L."/>
            <person name="Bahret A."/>
            <person name="Miller B."/>
            <person name="Marra M.A."/>
            <person name="Martienssen R."/>
            <person name="McCombie W.R."/>
            <person name="Wilson R.K."/>
            <person name="Murphy G."/>
            <person name="Bancroft I."/>
            <person name="Volckaert G."/>
            <person name="Wambutt R."/>
            <person name="Duesterhoeft A."/>
            <person name="Stiekema W."/>
            <person name="Pohl T."/>
            <person name="Entian K.-D."/>
            <person name="Terryn N."/>
            <person name="Hartley N."/>
            <person name="Bent E."/>
            <person name="Johnson S."/>
            <person name="Langham S.-A."/>
            <person name="McCullagh B."/>
            <person name="Robben J."/>
            <person name="Grymonprez B."/>
            <person name="Zimmermann W."/>
            <person name="Ramsperger U."/>
            <person name="Wedler H."/>
            <person name="Balke K."/>
            <person name="Wedler E."/>
            <person name="Peters S."/>
            <person name="van Staveren M."/>
            <person name="Dirkse W."/>
            <person name="Mooijman P."/>
            <person name="Klein Lankhorst R."/>
            <person name="Weitzenegger T."/>
            <person name="Bothe G."/>
            <person name="Rose M."/>
            <person name="Hauf J."/>
            <person name="Berneiser S."/>
            <person name="Hempel S."/>
            <person name="Feldpausch M."/>
            <person name="Lamberth S."/>
            <person name="Villarroel R."/>
            <person name="Gielen J."/>
            <person name="Ardiles W."/>
            <person name="Bents O."/>
            <person name="Lemcke K."/>
            <person name="Kolesov G."/>
            <person name="Mayer K.F.X."/>
            <person name="Rudd S."/>
            <person name="Schoof H."/>
            <person name="Schueller C."/>
            <person name="Zaccaria P."/>
            <person name="Mewes H.-W."/>
            <person name="Bevan M."/>
            <person name="Fransz P.F."/>
        </authorList>
    </citation>
    <scope>NUCLEOTIDE SEQUENCE [LARGE SCALE GENOMIC DNA]</scope>
    <source>
        <strain>cv. Columbia</strain>
    </source>
</reference>
<reference key="3">
    <citation type="journal article" date="2017" name="Plant J.">
        <title>Araport11: a complete reannotation of the Arabidopsis thaliana reference genome.</title>
        <authorList>
            <person name="Cheng C.Y."/>
            <person name="Krishnakumar V."/>
            <person name="Chan A.P."/>
            <person name="Thibaud-Nissen F."/>
            <person name="Schobel S."/>
            <person name="Town C.D."/>
        </authorList>
    </citation>
    <scope>GENOME REANNOTATION</scope>
    <source>
        <strain>cv. Columbia</strain>
    </source>
</reference>
<reference key="4">
    <citation type="journal article" date="2003" name="Science">
        <title>Empirical analysis of transcriptional activity in the Arabidopsis genome.</title>
        <authorList>
            <person name="Yamada K."/>
            <person name="Lim J."/>
            <person name="Dale J.M."/>
            <person name="Chen H."/>
            <person name="Shinn P."/>
            <person name="Palm C.J."/>
            <person name="Southwick A.M."/>
            <person name="Wu H.C."/>
            <person name="Kim C.J."/>
            <person name="Nguyen M."/>
            <person name="Pham P.K."/>
            <person name="Cheuk R.F."/>
            <person name="Karlin-Newmann G."/>
            <person name="Liu S.X."/>
            <person name="Lam B."/>
            <person name="Sakano H."/>
            <person name="Wu T."/>
            <person name="Yu G."/>
            <person name="Miranda M."/>
            <person name="Quach H.L."/>
            <person name="Tripp M."/>
            <person name="Chang C.H."/>
            <person name="Lee J.M."/>
            <person name="Toriumi M.J."/>
            <person name="Chan M.M."/>
            <person name="Tang C.C."/>
            <person name="Onodera C.S."/>
            <person name="Deng J.M."/>
            <person name="Akiyama K."/>
            <person name="Ansari Y."/>
            <person name="Arakawa T."/>
            <person name="Banh J."/>
            <person name="Banno F."/>
            <person name="Bowser L."/>
            <person name="Brooks S.Y."/>
            <person name="Carninci P."/>
            <person name="Chao Q."/>
            <person name="Choy N."/>
            <person name="Enju A."/>
            <person name="Goldsmith A.D."/>
            <person name="Gurjal M."/>
            <person name="Hansen N.F."/>
            <person name="Hayashizaki Y."/>
            <person name="Johnson-Hopson C."/>
            <person name="Hsuan V.W."/>
            <person name="Iida K."/>
            <person name="Karnes M."/>
            <person name="Khan S."/>
            <person name="Koesema E."/>
            <person name="Ishida J."/>
            <person name="Jiang P.X."/>
            <person name="Jones T."/>
            <person name="Kawai J."/>
            <person name="Kamiya A."/>
            <person name="Meyers C."/>
            <person name="Nakajima M."/>
            <person name="Narusaka M."/>
            <person name="Seki M."/>
            <person name="Sakurai T."/>
            <person name="Satou M."/>
            <person name="Tamse R."/>
            <person name="Vaysberg M."/>
            <person name="Wallender E.K."/>
            <person name="Wong C."/>
            <person name="Yamamura Y."/>
            <person name="Yuan S."/>
            <person name="Shinozaki K."/>
            <person name="Davis R.W."/>
            <person name="Theologis A."/>
            <person name="Ecker J.R."/>
        </authorList>
    </citation>
    <scope>NUCLEOTIDE SEQUENCE [LARGE SCALE MRNA]</scope>
    <source>
        <strain>cv. Columbia</strain>
    </source>
</reference>
<reference key="5">
    <citation type="submission" date="2004-09" db="EMBL/GenBank/DDBJ databases">
        <title>Large-scale analysis of RIKEN Arabidopsis full-length (RAFL) cDNAs.</title>
        <authorList>
            <person name="Totoki Y."/>
            <person name="Seki M."/>
            <person name="Ishida J."/>
            <person name="Nakajima M."/>
            <person name="Enju A."/>
            <person name="Kamiya A."/>
            <person name="Narusaka M."/>
            <person name="Shin-i T."/>
            <person name="Nakagawa M."/>
            <person name="Sakamoto N."/>
            <person name="Oishi K."/>
            <person name="Kohara Y."/>
            <person name="Kobayashi M."/>
            <person name="Toyoda A."/>
            <person name="Sakaki Y."/>
            <person name="Sakurai T."/>
            <person name="Iida K."/>
            <person name="Akiyama K."/>
            <person name="Satou M."/>
            <person name="Toyoda T."/>
            <person name="Konagaya A."/>
            <person name="Carninci P."/>
            <person name="Kawai J."/>
            <person name="Hayashizaki Y."/>
            <person name="Shinozaki K."/>
        </authorList>
    </citation>
    <scope>NUCLEOTIDE SEQUENCE [LARGE SCALE MRNA] OF 511-572</scope>
    <source>
        <strain>cv. Columbia</strain>
    </source>
</reference>
<reference key="6">
    <citation type="journal article" date="2012" name="Mol. Cell. Proteomics">
        <title>Comparative large-scale characterisation of plant vs. mammal proteins reveals similar and idiosyncratic N-alpha acetylation features.</title>
        <authorList>
            <person name="Bienvenut W.V."/>
            <person name="Sumpton D."/>
            <person name="Martinez A."/>
            <person name="Lilla S."/>
            <person name="Espagne C."/>
            <person name="Meinnel T."/>
            <person name="Giglione C."/>
        </authorList>
    </citation>
    <scope>ACETYLATION [LARGE SCALE ANALYSIS] AT ALA-2</scope>
    <scope>CLEAVAGE OF INITIATOR METHIONINE [LARGE SCALE ANALYSIS]</scope>
    <scope>IDENTIFICATION BY MASS SPECTROMETRY [LARGE SCALE ANALYSIS]</scope>
</reference>
<protein>
    <recommendedName>
        <fullName>2-hydroxyacyl-CoA lyase</fullName>
        <ecNumber evidence="3">4.1.2.63</ecNumber>
    </recommendedName>
    <alternativeName>
        <fullName>2-hydroxyphytanoyl-CoA lyase</fullName>
        <shortName>2-HPCL</shortName>
    </alternativeName>
    <alternativeName>
        <fullName>Oxalyl-CoA decarboxylase</fullName>
    </alternativeName>
</protein>
<organism>
    <name type="scientific">Arabidopsis thaliana</name>
    <name type="common">Mouse-ear cress</name>
    <dbReference type="NCBI Taxonomy" id="3702"/>
    <lineage>
        <taxon>Eukaryota</taxon>
        <taxon>Viridiplantae</taxon>
        <taxon>Streptophyta</taxon>
        <taxon>Embryophyta</taxon>
        <taxon>Tracheophyta</taxon>
        <taxon>Spermatophyta</taxon>
        <taxon>Magnoliopsida</taxon>
        <taxon>eudicotyledons</taxon>
        <taxon>Gunneridae</taxon>
        <taxon>Pentapetalae</taxon>
        <taxon>rosids</taxon>
        <taxon>malvids</taxon>
        <taxon>Brassicales</taxon>
        <taxon>Brassicaceae</taxon>
        <taxon>Camelineae</taxon>
        <taxon>Arabidopsis</taxon>
    </lineage>
</organism>
<gene>
    <name type="primary">HACL</name>
    <name type="synonym">HPCL</name>
    <name type="synonym">OCD</name>
    <name type="ordered locus">At5g17380</name>
    <name type="ORF">T10B6.40</name>
</gene>
<proteinExistence type="evidence at protein level"/>
<name>HACL_ARATH</name>
<feature type="initiator methionine" description="Removed" evidence="5">
    <location>
        <position position="1"/>
    </location>
</feature>
<feature type="chain" id="PRO_0000399509" description="2-hydroxyacyl-CoA lyase">
    <location>
        <begin position="2"/>
        <end position="572"/>
    </location>
</feature>
<feature type="region of interest" description="Thiamine pyrophosphate binding" evidence="1">
    <location>
        <begin position="407"/>
        <end position="488"/>
    </location>
</feature>
<feature type="binding site" evidence="2">
    <location>
        <position position="58"/>
    </location>
    <ligand>
        <name>thiamine diphosphate</name>
        <dbReference type="ChEBI" id="CHEBI:58937"/>
    </ligand>
</feature>
<feature type="binding site" evidence="2">
    <location>
        <position position="457"/>
    </location>
    <ligand>
        <name>Mg(2+)</name>
        <dbReference type="ChEBI" id="CHEBI:18420"/>
    </ligand>
</feature>
<feature type="binding site" evidence="2">
    <location>
        <position position="484"/>
    </location>
    <ligand>
        <name>Mg(2+)</name>
        <dbReference type="ChEBI" id="CHEBI:18420"/>
    </ligand>
</feature>
<feature type="modified residue" description="N-acetylalanine" evidence="5">
    <location>
        <position position="2"/>
    </location>
</feature>
<feature type="sequence conflict" description="In Ref. 1; CAC19854." evidence="4" ref="1">
    <original>M</original>
    <variation>L</variation>
    <location>
        <position position="103"/>
    </location>
</feature>
<feature type="sequence conflict" description="In Ref. 1; CAC19854." evidence="4" ref="1">
    <original>P</original>
    <variation>S</variation>
    <location>
        <position position="197"/>
    </location>
</feature>
<feature type="sequence conflict" description="In Ref. 1; CAC19854." evidence="4" ref="1">
    <original>R</original>
    <variation>T</variation>
    <location>
        <position position="203"/>
    </location>
</feature>
<sequence length="572" mass="61470">MADKSETTPPSIDGNVLVAKSLSHLGVTHMFGVVGIPVTSLASRAMALGIRFIAFHNEQSAGYAASAYGYLTGKPGILLTVSGPGCVHGLAGLSNAWVNTWPMVMISGSCDQRDVGRGDFQELDQIEAVKAFSKLSEKAKDVREIPDCVSRVLDRAVSGRPGGCYLDIPTDVLRQKISESEADKLVDEVERSRKEEPIRGSLRSEIESAVSLLRKAERPLIVFGKGAAYSRAEDELKKLVEITGIPFLPTPMGKGLLPDTHEFSATAARSLAIGKCDVALVVGARLNWLLHFGESPKWDKDVKFILVDVSEEEIELRKPHLGIVGDAKTVIGLLNREIKDDPFCLGKSNSWVESISKKAKENGEKMEIQLAKDVVPFNFLTPMRIIRDAILAVEGPSPVVVSEGANTMDVGRSVLVQKEPRTRLDAGTWGTMGVGLGYCIAAAVASPDRLVVAVEGDSGFGFSAMEVETLVRYNLAVVIIVFNNGGVYGGDRRGPEEISGPHKEDPAPTSFVPNAGYHKLIEAFGGKGYIVETPDELKSALAESFAARKPAVVNVIIDPFAGAESGRLQHKN</sequence>
<accession>Q9LF46</accession>
<accession>Q682H7</accession>
<accession>Q9FNY6</accession>
<comment type="function">
    <text evidence="1">Catalyzes a carbon-carbon cleavage reaction; cleaves a 2-hydroxy-3-methylacyl-CoA into formyl-CoA and a 2-methyl-branched fatty aldehyde.</text>
</comment>
<comment type="catalytic activity">
    <reaction evidence="3">
        <text>an (R)-2-hydroxy-long-chain-fatty acyl-CoA = a long-chain fatty aldehyde + formyl-CoA</text>
        <dbReference type="Rhea" id="RHEA:67444"/>
        <dbReference type="ChEBI" id="CHEBI:17176"/>
        <dbReference type="ChEBI" id="CHEBI:57376"/>
        <dbReference type="ChEBI" id="CHEBI:170012"/>
        <dbReference type="EC" id="4.1.2.63"/>
    </reaction>
    <physiologicalReaction direction="left-to-right" evidence="3">
        <dbReference type="Rhea" id="RHEA:67445"/>
    </physiologicalReaction>
</comment>
<comment type="catalytic activity">
    <reaction evidence="3">
        <text>a 2-hydroxy-3-methyl fatty acyl-CoA = a 2-methyl-branched fatty aldehyde + formyl-CoA</text>
        <dbReference type="Rhea" id="RHEA:25375"/>
        <dbReference type="ChEBI" id="CHEBI:49188"/>
        <dbReference type="ChEBI" id="CHEBI:57376"/>
        <dbReference type="ChEBI" id="CHEBI:58783"/>
        <dbReference type="EC" id="4.1.2.63"/>
    </reaction>
    <physiologicalReaction direction="left-to-right" evidence="3">
        <dbReference type="Rhea" id="RHEA:25376"/>
    </physiologicalReaction>
</comment>
<comment type="cofactor">
    <cofactor evidence="1">
        <name>Mg(2+)</name>
        <dbReference type="ChEBI" id="CHEBI:18420"/>
    </cofactor>
    <text evidence="1">Binds 1 Mg(2+) ion per subunit.</text>
</comment>
<comment type="cofactor">
    <cofactor evidence="1">
        <name>thiamine diphosphate</name>
        <dbReference type="ChEBI" id="CHEBI:58937"/>
    </cofactor>
    <text evidence="1">Binds 1 thiamine pyrophosphate per subunit.</text>
</comment>
<comment type="subunit">
    <text evidence="1">Homotetramer.</text>
</comment>
<comment type="similarity">
    <text evidence="4">Belongs to the TPP enzyme family.</text>
</comment>